<protein>
    <recommendedName>
        <fullName evidence="1">2,3-bisphosphoglycerate-independent phosphoglycerate mutase</fullName>
        <shortName evidence="1">BPG-independent PGAM</shortName>
        <shortName evidence="1">Phosphoglyceromutase</shortName>
        <shortName evidence="1">iPGM</shortName>
        <ecNumber evidence="1">5.4.2.12</ecNumber>
    </recommendedName>
</protein>
<evidence type="ECO:0000255" key="1">
    <source>
        <dbReference type="HAMAP-Rule" id="MF_01038"/>
    </source>
</evidence>
<reference key="1">
    <citation type="journal article" date="2005" name="J. Bacteriol.">
        <title>Insights on evolution of virulence and resistance from the complete genome analysis of an early methicillin-resistant Staphylococcus aureus strain and a biofilm-producing methicillin-resistant Staphylococcus epidermidis strain.</title>
        <authorList>
            <person name="Gill S.R."/>
            <person name="Fouts D.E."/>
            <person name="Archer G.L."/>
            <person name="Mongodin E.F."/>
            <person name="DeBoy R.T."/>
            <person name="Ravel J."/>
            <person name="Paulsen I.T."/>
            <person name="Kolonay J.F."/>
            <person name="Brinkac L.M."/>
            <person name="Beanan M.J."/>
            <person name="Dodson R.J."/>
            <person name="Daugherty S.C."/>
            <person name="Madupu R."/>
            <person name="Angiuoli S.V."/>
            <person name="Durkin A.S."/>
            <person name="Haft D.H."/>
            <person name="Vamathevan J.J."/>
            <person name="Khouri H."/>
            <person name="Utterback T.R."/>
            <person name="Lee C."/>
            <person name="Dimitrov G."/>
            <person name="Jiang L."/>
            <person name="Qin H."/>
            <person name="Weidman J."/>
            <person name="Tran K."/>
            <person name="Kang K.H."/>
            <person name="Hance I.R."/>
            <person name="Nelson K.E."/>
            <person name="Fraser C.M."/>
        </authorList>
    </citation>
    <scope>NUCLEOTIDE SEQUENCE [LARGE SCALE GENOMIC DNA]</scope>
    <source>
        <strain>ATCC 35984 / DSM 28319 / BCRC 17069 / CCUG 31568 / BM 3577 / RP62A</strain>
    </source>
</reference>
<gene>
    <name evidence="1" type="primary">gpmI</name>
    <name type="ordered locus">SERP0445</name>
</gene>
<dbReference type="EC" id="5.4.2.12" evidence="1"/>
<dbReference type="EMBL" id="CP000029">
    <property type="protein sequence ID" value="AAW53885.1"/>
    <property type="molecule type" value="Genomic_DNA"/>
</dbReference>
<dbReference type="RefSeq" id="WP_001829591.1">
    <property type="nucleotide sequence ID" value="NC_002976.3"/>
</dbReference>
<dbReference type="SMR" id="Q5HQV1"/>
<dbReference type="STRING" id="176279.SERP0445"/>
<dbReference type="GeneID" id="50019292"/>
<dbReference type="KEGG" id="ser:SERP0445"/>
<dbReference type="eggNOG" id="COG0696">
    <property type="taxonomic scope" value="Bacteria"/>
</dbReference>
<dbReference type="HOGENOM" id="CLU_026099_2_0_9"/>
<dbReference type="UniPathway" id="UPA00109">
    <property type="reaction ID" value="UER00186"/>
</dbReference>
<dbReference type="Proteomes" id="UP000000531">
    <property type="component" value="Chromosome"/>
</dbReference>
<dbReference type="GO" id="GO:0005829">
    <property type="term" value="C:cytosol"/>
    <property type="evidence" value="ECO:0007669"/>
    <property type="project" value="TreeGrafter"/>
</dbReference>
<dbReference type="GO" id="GO:0030145">
    <property type="term" value="F:manganese ion binding"/>
    <property type="evidence" value="ECO:0007669"/>
    <property type="project" value="UniProtKB-UniRule"/>
</dbReference>
<dbReference type="GO" id="GO:0004619">
    <property type="term" value="F:phosphoglycerate mutase activity"/>
    <property type="evidence" value="ECO:0007669"/>
    <property type="project" value="UniProtKB-EC"/>
</dbReference>
<dbReference type="GO" id="GO:0006007">
    <property type="term" value="P:glucose catabolic process"/>
    <property type="evidence" value="ECO:0007669"/>
    <property type="project" value="InterPro"/>
</dbReference>
<dbReference type="GO" id="GO:0006096">
    <property type="term" value="P:glycolytic process"/>
    <property type="evidence" value="ECO:0007669"/>
    <property type="project" value="UniProtKB-UniRule"/>
</dbReference>
<dbReference type="CDD" id="cd16010">
    <property type="entry name" value="iPGM"/>
    <property type="match status" value="1"/>
</dbReference>
<dbReference type="FunFam" id="3.40.1450.10:FF:000001">
    <property type="entry name" value="2,3-bisphosphoglycerate-independent phosphoglycerate mutase"/>
    <property type="match status" value="1"/>
</dbReference>
<dbReference type="FunFam" id="3.40.720.10:FF:000001">
    <property type="entry name" value="2,3-bisphosphoglycerate-independent phosphoglycerate mutase"/>
    <property type="match status" value="1"/>
</dbReference>
<dbReference type="Gene3D" id="3.40.720.10">
    <property type="entry name" value="Alkaline Phosphatase, subunit A"/>
    <property type="match status" value="1"/>
</dbReference>
<dbReference type="Gene3D" id="3.40.1450.10">
    <property type="entry name" value="BPG-independent phosphoglycerate mutase, domain B"/>
    <property type="match status" value="1"/>
</dbReference>
<dbReference type="HAMAP" id="MF_01038">
    <property type="entry name" value="GpmI"/>
    <property type="match status" value="1"/>
</dbReference>
<dbReference type="InterPro" id="IPR017850">
    <property type="entry name" value="Alkaline_phosphatase_core_sf"/>
</dbReference>
<dbReference type="InterPro" id="IPR011258">
    <property type="entry name" value="BPG-indep_PGM_N"/>
</dbReference>
<dbReference type="InterPro" id="IPR006124">
    <property type="entry name" value="Metalloenzyme"/>
</dbReference>
<dbReference type="InterPro" id="IPR036646">
    <property type="entry name" value="PGAM_B_sf"/>
</dbReference>
<dbReference type="InterPro" id="IPR005995">
    <property type="entry name" value="Pgm_bpd_ind"/>
</dbReference>
<dbReference type="NCBIfam" id="TIGR01307">
    <property type="entry name" value="pgm_bpd_ind"/>
    <property type="match status" value="1"/>
</dbReference>
<dbReference type="PANTHER" id="PTHR31637">
    <property type="entry name" value="2,3-BISPHOSPHOGLYCERATE-INDEPENDENT PHOSPHOGLYCERATE MUTASE"/>
    <property type="match status" value="1"/>
</dbReference>
<dbReference type="PANTHER" id="PTHR31637:SF0">
    <property type="entry name" value="2,3-BISPHOSPHOGLYCERATE-INDEPENDENT PHOSPHOGLYCERATE MUTASE"/>
    <property type="match status" value="1"/>
</dbReference>
<dbReference type="Pfam" id="PF06415">
    <property type="entry name" value="iPGM_N"/>
    <property type="match status" value="1"/>
</dbReference>
<dbReference type="Pfam" id="PF01676">
    <property type="entry name" value="Metalloenzyme"/>
    <property type="match status" value="1"/>
</dbReference>
<dbReference type="PIRSF" id="PIRSF001492">
    <property type="entry name" value="IPGAM"/>
    <property type="match status" value="1"/>
</dbReference>
<dbReference type="SUPFAM" id="SSF64158">
    <property type="entry name" value="2,3-Bisphosphoglycerate-independent phosphoglycerate mutase, substrate-binding domain"/>
    <property type="match status" value="1"/>
</dbReference>
<dbReference type="SUPFAM" id="SSF53649">
    <property type="entry name" value="Alkaline phosphatase-like"/>
    <property type="match status" value="1"/>
</dbReference>
<sequence>MAKQPTALIILDGFANRESEHGNAVKQAHKPNFDRYYEKYPTTQIEASGLDVGLPEGQMGNSEVGHMNIGAGRIVYQSLTRINKSIEDGEFFDNTVLNNAVKHVKDNGSALHVFGLLSDGGVHSHYKHLFAILELAKKQGIDKVYVHAFLDGRDVDQKSALKYIEETEDKFKELGVGQFASVSGRYYAMDRDKRWDREERAYNAIRNFEGPTFTSAKAGVEANYKNDVTDEFVEPFIVEGQNDGVNDGDAVIFYNFRPDRAAQLSEIFTNKAFDGFKVEQVDNLFYATFTKYNDNVDAEIVFEKVDLNNTIGEVAQDNGLKQLRIAETEKYPHVTYFMSGGRNEEFEGERRRLIDSPKVATYDLKPEMSAYEVKDALLEELDKGDLDLILLNFANPDMVGHSGMLEPTIKAIEAVDECLGEVVDKIIDMGGHAIITADHGNSDQVLTDDDQPMTTHTTNPVPVIVTKEGVTLRETGRLGDLAPTLLDLLNVKQPSEMTGESLIKH</sequence>
<organism>
    <name type="scientific">Staphylococcus epidermidis (strain ATCC 35984 / DSM 28319 / BCRC 17069 / CCUG 31568 / BM 3577 / RP62A)</name>
    <dbReference type="NCBI Taxonomy" id="176279"/>
    <lineage>
        <taxon>Bacteria</taxon>
        <taxon>Bacillati</taxon>
        <taxon>Bacillota</taxon>
        <taxon>Bacilli</taxon>
        <taxon>Bacillales</taxon>
        <taxon>Staphylococcaceae</taxon>
        <taxon>Staphylococcus</taxon>
    </lineage>
</organism>
<keyword id="KW-0324">Glycolysis</keyword>
<keyword id="KW-0413">Isomerase</keyword>
<keyword id="KW-0464">Manganese</keyword>
<keyword id="KW-0479">Metal-binding</keyword>
<keyword id="KW-1185">Reference proteome</keyword>
<proteinExistence type="inferred from homology"/>
<comment type="function">
    <text evidence="1">Catalyzes the interconversion of 2-phosphoglycerate and 3-phosphoglycerate.</text>
</comment>
<comment type="catalytic activity">
    <reaction evidence="1">
        <text>(2R)-2-phosphoglycerate = (2R)-3-phosphoglycerate</text>
        <dbReference type="Rhea" id="RHEA:15901"/>
        <dbReference type="ChEBI" id="CHEBI:58272"/>
        <dbReference type="ChEBI" id="CHEBI:58289"/>
        <dbReference type="EC" id="5.4.2.12"/>
    </reaction>
</comment>
<comment type="cofactor">
    <cofactor evidence="1">
        <name>Mn(2+)</name>
        <dbReference type="ChEBI" id="CHEBI:29035"/>
    </cofactor>
    <text evidence="1">Binds 2 manganese ions per subunit.</text>
</comment>
<comment type="pathway">
    <text evidence="1">Carbohydrate degradation; glycolysis; pyruvate from D-glyceraldehyde 3-phosphate: step 3/5.</text>
</comment>
<comment type="subunit">
    <text evidence="1">Monomer.</text>
</comment>
<comment type="similarity">
    <text evidence="1">Belongs to the BPG-independent phosphoglycerate mutase family.</text>
</comment>
<accession>Q5HQV1</accession>
<name>GPMI_STAEQ</name>
<feature type="chain" id="PRO_0000212214" description="2,3-bisphosphoglycerate-independent phosphoglycerate mutase">
    <location>
        <begin position="1"/>
        <end position="505"/>
    </location>
</feature>
<feature type="active site" description="Phosphoserine intermediate" evidence="1">
    <location>
        <position position="62"/>
    </location>
</feature>
<feature type="binding site" evidence="1">
    <location>
        <position position="12"/>
    </location>
    <ligand>
        <name>Mn(2+)</name>
        <dbReference type="ChEBI" id="CHEBI:29035"/>
        <label>2</label>
    </ligand>
</feature>
<feature type="binding site" evidence="1">
    <location>
        <position position="62"/>
    </location>
    <ligand>
        <name>Mn(2+)</name>
        <dbReference type="ChEBI" id="CHEBI:29035"/>
        <label>2</label>
    </ligand>
</feature>
<feature type="binding site" evidence="1">
    <location>
        <position position="123"/>
    </location>
    <ligand>
        <name>substrate</name>
    </ligand>
</feature>
<feature type="binding site" evidence="1">
    <location>
        <begin position="153"/>
        <end position="154"/>
    </location>
    <ligand>
        <name>substrate</name>
    </ligand>
</feature>
<feature type="binding site" evidence="1">
    <location>
        <position position="185"/>
    </location>
    <ligand>
        <name>substrate</name>
    </ligand>
</feature>
<feature type="binding site" evidence="1">
    <location>
        <position position="191"/>
    </location>
    <ligand>
        <name>substrate</name>
    </ligand>
</feature>
<feature type="binding site" evidence="1">
    <location>
        <begin position="257"/>
        <end position="260"/>
    </location>
    <ligand>
        <name>substrate</name>
    </ligand>
</feature>
<feature type="binding site" evidence="1">
    <location>
        <position position="330"/>
    </location>
    <ligand>
        <name>substrate</name>
    </ligand>
</feature>
<feature type="binding site" evidence="1">
    <location>
        <position position="397"/>
    </location>
    <ligand>
        <name>Mn(2+)</name>
        <dbReference type="ChEBI" id="CHEBI:29035"/>
        <label>1</label>
    </ligand>
</feature>
<feature type="binding site" evidence="1">
    <location>
        <position position="401"/>
    </location>
    <ligand>
        <name>Mn(2+)</name>
        <dbReference type="ChEBI" id="CHEBI:29035"/>
        <label>1</label>
    </ligand>
</feature>
<feature type="binding site" evidence="1">
    <location>
        <position position="438"/>
    </location>
    <ligand>
        <name>Mn(2+)</name>
        <dbReference type="ChEBI" id="CHEBI:29035"/>
        <label>2</label>
    </ligand>
</feature>
<feature type="binding site" evidence="1">
    <location>
        <position position="439"/>
    </location>
    <ligand>
        <name>Mn(2+)</name>
        <dbReference type="ChEBI" id="CHEBI:29035"/>
        <label>2</label>
    </ligand>
</feature>
<feature type="binding site" evidence="1">
    <location>
        <position position="456"/>
    </location>
    <ligand>
        <name>Mn(2+)</name>
        <dbReference type="ChEBI" id="CHEBI:29035"/>
        <label>1</label>
    </ligand>
</feature>